<keyword id="KW-0143">Chaperone</keyword>
<keyword id="KW-0963">Cytoplasm</keyword>
<keyword id="KW-1185">Reference proteome</keyword>
<gene>
    <name type="primary">mgr</name>
    <name type="ORF">CG6719</name>
</gene>
<reference key="1">
    <citation type="journal article" date="2012" name="Proc. Natl. Acad. Sci. U.S.A.">
        <title>Drosophila Mgr, a Prefoldin subunit cooperating with von Hippel Lindau to regulate tubulin stability.</title>
        <authorList>
            <person name="Delgehyr N."/>
            <person name="Wieland U."/>
            <person name="Rangone H."/>
            <person name="Pinson X."/>
            <person name="Mao G."/>
            <person name="Dzhindzhev N.S."/>
            <person name="McLean D."/>
            <person name="Riparbelli M.G."/>
            <person name="Llamazares S."/>
            <person name="Callaini G."/>
            <person name="Gonzalez C."/>
            <person name="Glover D.M."/>
        </authorList>
    </citation>
    <scope>NUCLEOTIDE SEQUENCE [GENOMIC DNA]</scope>
    <scope>FUNCTION</scope>
    <scope>SELF-ASSOCIATION</scope>
    <scope>INTERACTION WITH VHL; BETATUB56D AND TUBULIN ALPHA-BETA HETERODIMER</scope>
    <scope>SUBCELLULAR LOCATION</scope>
    <scope>TISSUE SPECIFICITY</scope>
    <scope>DISRUPTION PHENOTYPE</scope>
</reference>
<reference key="2">
    <citation type="journal article" date="2000" name="Science">
        <title>The genome sequence of Drosophila melanogaster.</title>
        <authorList>
            <person name="Adams M.D."/>
            <person name="Celniker S.E."/>
            <person name="Holt R.A."/>
            <person name="Evans C.A."/>
            <person name="Gocayne J.D."/>
            <person name="Amanatides P.G."/>
            <person name="Scherer S.E."/>
            <person name="Li P.W."/>
            <person name="Hoskins R.A."/>
            <person name="Galle R.F."/>
            <person name="George R.A."/>
            <person name="Lewis S.E."/>
            <person name="Richards S."/>
            <person name="Ashburner M."/>
            <person name="Henderson S.N."/>
            <person name="Sutton G.G."/>
            <person name="Wortman J.R."/>
            <person name="Yandell M.D."/>
            <person name="Zhang Q."/>
            <person name="Chen L.X."/>
            <person name="Brandon R.C."/>
            <person name="Rogers Y.-H.C."/>
            <person name="Blazej R.G."/>
            <person name="Champe M."/>
            <person name="Pfeiffer B.D."/>
            <person name="Wan K.H."/>
            <person name="Doyle C."/>
            <person name="Baxter E.G."/>
            <person name="Helt G."/>
            <person name="Nelson C.R."/>
            <person name="Miklos G.L.G."/>
            <person name="Abril J.F."/>
            <person name="Agbayani A."/>
            <person name="An H.-J."/>
            <person name="Andrews-Pfannkoch C."/>
            <person name="Baldwin D."/>
            <person name="Ballew R.M."/>
            <person name="Basu A."/>
            <person name="Baxendale J."/>
            <person name="Bayraktaroglu L."/>
            <person name="Beasley E.M."/>
            <person name="Beeson K.Y."/>
            <person name="Benos P.V."/>
            <person name="Berman B.P."/>
            <person name="Bhandari D."/>
            <person name="Bolshakov S."/>
            <person name="Borkova D."/>
            <person name="Botchan M.R."/>
            <person name="Bouck J."/>
            <person name="Brokstein P."/>
            <person name="Brottier P."/>
            <person name="Burtis K.C."/>
            <person name="Busam D.A."/>
            <person name="Butler H."/>
            <person name="Cadieu E."/>
            <person name="Center A."/>
            <person name="Chandra I."/>
            <person name="Cherry J.M."/>
            <person name="Cawley S."/>
            <person name="Dahlke C."/>
            <person name="Davenport L.B."/>
            <person name="Davies P."/>
            <person name="de Pablos B."/>
            <person name="Delcher A."/>
            <person name="Deng Z."/>
            <person name="Mays A.D."/>
            <person name="Dew I."/>
            <person name="Dietz S.M."/>
            <person name="Dodson K."/>
            <person name="Doup L.E."/>
            <person name="Downes M."/>
            <person name="Dugan-Rocha S."/>
            <person name="Dunkov B.C."/>
            <person name="Dunn P."/>
            <person name="Durbin K.J."/>
            <person name="Evangelista C.C."/>
            <person name="Ferraz C."/>
            <person name="Ferriera S."/>
            <person name="Fleischmann W."/>
            <person name="Fosler C."/>
            <person name="Gabrielian A.E."/>
            <person name="Garg N.S."/>
            <person name="Gelbart W.M."/>
            <person name="Glasser K."/>
            <person name="Glodek A."/>
            <person name="Gong F."/>
            <person name="Gorrell J.H."/>
            <person name="Gu Z."/>
            <person name="Guan P."/>
            <person name="Harris M."/>
            <person name="Harris N.L."/>
            <person name="Harvey D.A."/>
            <person name="Heiman T.J."/>
            <person name="Hernandez J.R."/>
            <person name="Houck J."/>
            <person name="Hostin D."/>
            <person name="Houston K.A."/>
            <person name="Howland T.J."/>
            <person name="Wei M.-H."/>
            <person name="Ibegwam C."/>
            <person name="Jalali M."/>
            <person name="Kalush F."/>
            <person name="Karpen G.H."/>
            <person name="Ke Z."/>
            <person name="Kennison J.A."/>
            <person name="Ketchum K.A."/>
            <person name="Kimmel B.E."/>
            <person name="Kodira C.D."/>
            <person name="Kraft C.L."/>
            <person name="Kravitz S."/>
            <person name="Kulp D."/>
            <person name="Lai Z."/>
            <person name="Lasko P."/>
            <person name="Lei Y."/>
            <person name="Levitsky A.A."/>
            <person name="Li J.H."/>
            <person name="Li Z."/>
            <person name="Liang Y."/>
            <person name="Lin X."/>
            <person name="Liu X."/>
            <person name="Mattei B."/>
            <person name="McIntosh T.C."/>
            <person name="McLeod M.P."/>
            <person name="McPherson D."/>
            <person name="Merkulov G."/>
            <person name="Milshina N.V."/>
            <person name="Mobarry C."/>
            <person name="Morris J."/>
            <person name="Moshrefi A."/>
            <person name="Mount S.M."/>
            <person name="Moy M."/>
            <person name="Murphy B."/>
            <person name="Murphy L."/>
            <person name="Muzny D.M."/>
            <person name="Nelson D.L."/>
            <person name="Nelson D.R."/>
            <person name="Nelson K.A."/>
            <person name="Nixon K."/>
            <person name="Nusskern D.R."/>
            <person name="Pacleb J.M."/>
            <person name="Palazzolo M."/>
            <person name="Pittman G.S."/>
            <person name="Pan S."/>
            <person name="Pollard J."/>
            <person name="Puri V."/>
            <person name="Reese M.G."/>
            <person name="Reinert K."/>
            <person name="Remington K."/>
            <person name="Saunders R.D.C."/>
            <person name="Scheeler F."/>
            <person name="Shen H."/>
            <person name="Shue B.C."/>
            <person name="Siden-Kiamos I."/>
            <person name="Simpson M."/>
            <person name="Skupski M.P."/>
            <person name="Smith T.J."/>
            <person name="Spier E."/>
            <person name="Spradling A.C."/>
            <person name="Stapleton M."/>
            <person name="Strong R."/>
            <person name="Sun E."/>
            <person name="Svirskas R."/>
            <person name="Tector C."/>
            <person name="Turner R."/>
            <person name="Venter E."/>
            <person name="Wang A.H."/>
            <person name="Wang X."/>
            <person name="Wang Z.-Y."/>
            <person name="Wassarman D.A."/>
            <person name="Weinstock G.M."/>
            <person name="Weissenbach J."/>
            <person name="Williams S.M."/>
            <person name="Woodage T."/>
            <person name="Worley K.C."/>
            <person name="Wu D."/>
            <person name="Yang S."/>
            <person name="Yao Q.A."/>
            <person name="Ye J."/>
            <person name="Yeh R.-F."/>
            <person name="Zaveri J.S."/>
            <person name="Zhan M."/>
            <person name="Zhang G."/>
            <person name="Zhao Q."/>
            <person name="Zheng L."/>
            <person name="Zheng X.H."/>
            <person name="Zhong F.N."/>
            <person name="Zhong W."/>
            <person name="Zhou X."/>
            <person name="Zhu S.C."/>
            <person name="Zhu X."/>
            <person name="Smith H.O."/>
            <person name="Gibbs R.A."/>
            <person name="Myers E.W."/>
            <person name="Rubin G.M."/>
            <person name="Venter J.C."/>
        </authorList>
    </citation>
    <scope>NUCLEOTIDE SEQUENCE [LARGE SCALE GENOMIC DNA]</scope>
    <source>
        <strain>Berkeley</strain>
    </source>
</reference>
<reference key="3">
    <citation type="journal article" date="2002" name="Genome Biol.">
        <title>Annotation of the Drosophila melanogaster euchromatic genome: a systematic review.</title>
        <authorList>
            <person name="Misra S."/>
            <person name="Crosby M.A."/>
            <person name="Mungall C.J."/>
            <person name="Matthews B.B."/>
            <person name="Campbell K.S."/>
            <person name="Hradecky P."/>
            <person name="Huang Y."/>
            <person name="Kaminker J.S."/>
            <person name="Millburn G.H."/>
            <person name="Prochnik S.E."/>
            <person name="Smith C.D."/>
            <person name="Tupy J.L."/>
            <person name="Whitfield E.J."/>
            <person name="Bayraktaroglu L."/>
            <person name="Berman B.P."/>
            <person name="Bettencourt B.R."/>
            <person name="Celniker S.E."/>
            <person name="de Grey A.D.N.J."/>
            <person name="Drysdale R.A."/>
            <person name="Harris N.L."/>
            <person name="Richter J."/>
            <person name="Russo S."/>
            <person name="Schroeder A.J."/>
            <person name="Shu S.Q."/>
            <person name="Stapleton M."/>
            <person name="Yamada C."/>
            <person name="Ashburner M."/>
            <person name="Gelbart W.M."/>
            <person name="Rubin G.M."/>
            <person name="Lewis S.E."/>
        </authorList>
    </citation>
    <scope>GENOME REANNOTATION</scope>
    <source>
        <strain>Berkeley</strain>
    </source>
</reference>
<reference key="4">
    <citation type="submission" date="2003-01" db="EMBL/GenBank/DDBJ databases">
        <authorList>
            <person name="Stapleton M."/>
            <person name="Brokstein P."/>
            <person name="Hong L."/>
            <person name="Agbayani A."/>
            <person name="Carlson J."/>
            <person name="Champe M."/>
            <person name="Chavez C."/>
            <person name="Dorsett V."/>
            <person name="Dresnek D."/>
            <person name="Farfan D."/>
            <person name="Frise E."/>
            <person name="George R."/>
            <person name="Gonzalez M."/>
            <person name="Guarin H."/>
            <person name="Kronmiller B."/>
            <person name="Li P."/>
            <person name="Liao G."/>
            <person name="Miranda A."/>
            <person name="Mungall C.J."/>
            <person name="Nunoo J."/>
            <person name="Pacleb J."/>
            <person name="Paragas V."/>
            <person name="Park S."/>
            <person name="Patel S."/>
            <person name="Phouanenavong S."/>
            <person name="Wan K."/>
            <person name="Yu C."/>
            <person name="Lewis S.E."/>
            <person name="Rubin G.M."/>
            <person name="Celniker S."/>
        </authorList>
    </citation>
    <scope>NUCLEOTIDE SEQUENCE [LARGE SCALE MRNA]</scope>
    <source>
        <strain>Berkeley</strain>
        <tissue>Embryo</tissue>
    </source>
</reference>
<reference key="5">
    <citation type="journal article" date="1988" name="J. Cell Sci.">
        <title>Functional monopolar spindles caused by mutation in mgr, a cell division gene of Drosophila melanogaster.</title>
        <authorList>
            <person name="Gonzalez C."/>
            <person name="Casal J."/>
            <person name="Ripoll P."/>
        </authorList>
    </citation>
    <scope>DISRUPTION PHENOTYPE</scope>
</reference>
<accession>Q9VGP6</accession>
<accession>Q86PA8</accession>
<comment type="function">
    <text evidence="1 2">Binds specifically to cytosolic chaperonin (c-CPN) and transfers target proteins to it. Binds to nascent polypeptide chain and promotes folding in an environment in which there are many competing pathways for nonnative proteins (By similarity). Required for tubulin stability and spindle and centrosome formation in cooperation with Vhl.</text>
</comment>
<comment type="subunit">
    <text evidence="1 2">Heterohexamer of two PFD-alpha type and four PFD-beta type subunits (By similarity). Interacts with itself. Interacts with Vhl and betaTub56D/tubulin beta-1 chain. Interacts with tubulin alpha-beta heterodimers by itself or in complex with Vhl. Does not interact with microtubules (MTs).</text>
</comment>
<comment type="interaction">
    <interactant intactId="EBI-186707">
        <id>Q9VGP6</id>
    </interactant>
    <interactant intactId="EBI-112583">
        <id>Q9VTE5</id>
        <label>Pfdn2</label>
    </interactant>
    <organismsDiffer>false</organismsDiffer>
    <experiments>3</experiments>
</comment>
<comment type="interaction">
    <interactant intactId="EBI-186707">
        <id>Q9VGP6</id>
    </interactant>
    <interactant intactId="EBI-100243">
        <id>Q9VCZ8</id>
        <label>Pfdn5</label>
    </interactant>
    <organismsDiffer>false</organismsDiffer>
    <experiments>5</experiments>
</comment>
<comment type="subcellular location">
    <subcellularLocation>
        <location evidence="2">Cytoplasm</location>
    </subcellularLocation>
</comment>
<comment type="tissue specificity">
    <text evidence="2">Expressed in larval central nervous system (CNS) and pupal testis (at protein level).</text>
</comment>
<comment type="disruption phenotype">
    <text evidence="2 3">Pupal lethal. Most mutants die just before emergence from the pupal case. In mutant larval CNS, neuroblasts show bipolar spindles that may lack one or both centrosomes or monopolar spindles having one or two centrosomes at the single pole. The mitotic index is elevated twofold over that in wild-type larval brains and the ratio of metaphase:anaphase two- to threefold over wild-type. Mutant neuroblasts also show a decrease of 25% in betaTub56D/tubulin beta chain-1 expression. Mutant mature primary spermatocytes show impaired MT network resulting in meiotic spindles either absent or highly abnormal. In mutant testis, decreased expression of betaTub85D/tubulin beta-2 chain is observed.</text>
</comment>
<comment type="similarity">
    <text evidence="4">Belongs to the prefoldin subunit alpha family.</text>
</comment>
<protein>
    <recommendedName>
        <fullName>Prefoldin subunit 3</fullName>
    </recommendedName>
    <alternativeName>
        <fullName>Protein merry-go-round</fullName>
    </alternativeName>
    <alternativeName>
        <fullName>von Hippel-Lindau-binding protein 1</fullName>
    </alternativeName>
</protein>
<organism>
    <name type="scientific">Drosophila melanogaster</name>
    <name type="common">Fruit fly</name>
    <dbReference type="NCBI Taxonomy" id="7227"/>
    <lineage>
        <taxon>Eukaryota</taxon>
        <taxon>Metazoa</taxon>
        <taxon>Ecdysozoa</taxon>
        <taxon>Arthropoda</taxon>
        <taxon>Hexapoda</taxon>
        <taxon>Insecta</taxon>
        <taxon>Pterygota</taxon>
        <taxon>Neoptera</taxon>
        <taxon>Endopterygota</taxon>
        <taxon>Diptera</taxon>
        <taxon>Brachycera</taxon>
        <taxon>Muscomorpha</taxon>
        <taxon>Ephydroidea</taxon>
        <taxon>Drosophilidae</taxon>
        <taxon>Drosophila</taxon>
        <taxon>Sophophora</taxon>
    </lineage>
</organism>
<dbReference type="EMBL" id="AE014297">
    <property type="protein sequence ID" value="AAF54630.1"/>
    <property type="molecule type" value="Genomic_DNA"/>
</dbReference>
<dbReference type="EMBL" id="BT003247">
    <property type="protein sequence ID" value="AAO25004.1"/>
    <property type="molecule type" value="mRNA"/>
</dbReference>
<dbReference type="RefSeq" id="NP_650067.1">
    <property type="nucleotide sequence ID" value="NM_141810.4"/>
</dbReference>
<dbReference type="SMR" id="Q9VGP6"/>
<dbReference type="BioGRID" id="66498">
    <property type="interactions" value="22"/>
</dbReference>
<dbReference type="ComplexPortal" id="CPX-2389">
    <property type="entry name" value="Prefoldin co-chaperone complex"/>
</dbReference>
<dbReference type="FunCoup" id="Q9VGP6">
    <property type="interactions" value="1505"/>
</dbReference>
<dbReference type="IntAct" id="Q9VGP6">
    <property type="interactions" value="13"/>
</dbReference>
<dbReference type="STRING" id="7227.FBpp0081882"/>
<dbReference type="PaxDb" id="7227-FBpp0081882"/>
<dbReference type="PeptideAtlas" id="Q9VGP6"/>
<dbReference type="DNASU" id="41365"/>
<dbReference type="EnsemblMetazoa" id="FBtr0082406">
    <property type="protein sequence ID" value="FBpp0081882"/>
    <property type="gene ID" value="FBgn0264694"/>
</dbReference>
<dbReference type="GeneID" id="41365"/>
<dbReference type="KEGG" id="dme:Dmel_CG6719"/>
<dbReference type="UCSC" id="CG6719-RA">
    <property type="organism name" value="d. melanogaster"/>
</dbReference>
<dbReference type="AGR" id="FB:FBgn0264694"/>
<dbReference type="CTD" id="41365"/>
<dbReference type="FlyBase" id="FBgn0264694">
    <property type="gene designation" value="mgr"/>
</dbReference>
<dbReference type="VEuPathDB" id="VectorBase:FBgn0264694"/>
<dbReference type="eggNOG" id="KOG3313">
    <property type="taxonomic scope" value="Eukaryota"/>
</dbReference>
<dbReference type="GeneTree" id="ENSGT00390000018904"/>
<dbReference type="HOGENOM" id="CLU_083737_1_0_1"/>
<dbReference type="InParanoid" id="Q9VGP6"/>
<dbReference type="OMA" id="YNWDVAQ"/>
<dbReference type="OrthoDB" id="6375174at2759"/>
<dbReference type="PhylomeDB" id="Q9VGP6"/>
<dbReference type="SignaLink" id="Q9VGP6"/>
<dbReference type="BioGRID-ORCS" id="41365">
    <property type="hits" value="0 hits in 1 CRISPR screen"/>
</dbReference>
<dbReference type="GenomeRNAi" id="41365"/>
<dbReference type="PRO" id="PR:Q9VGP6"/>
<dbReference type="Proteomes" id="UP000000803">
    <property type="component" value="Chromosome 3R"/>
</dbReference>
<dbReference type="Bgee" id="FBgn0264694">
    <property type="expression patterns" value="Expressed in secondary oocyte and 168 other cell types or tissues"/>
</dbReference>
<dbReference type="GO" id="GO:0005737">
    <property type="term" value="C:cytoplasm"/>
    <property type="evidence" value="ECO:0000314"/>
    <property type="project" value="FlyBase"/>
</dbReference>
<dbReference type="GO" id="GO:0016272">
    <property type="term" value="C:prefoldin complex"/>
    <property type="evidence" value="ECO:0000314"/>
    <property type="project" value="FlyBase"/>
</dbReference>
<dbReference type="GO" id="GO:0048487">
    <property type="term" value="F:beta-tubulin binding"/>
    <property type="evidence" value="ECO:0000314"/>
    <property type="project" value="FlyBase"/>
</dbReference>
<dbReference type="GO" id="GO:0015631">
    <property type="term" value="F:tubulin binding"/>
    <property type="evidence" value="ECO:0000318"/>
    <property type="project" value="GO_Central"/>
</dbReference>
<dbReference type="GO" id="GO:0007098">
    <property type="term" value="P:centrosome cycle"/>
    <property type="evidence" value="ECO:0000315"/>
    <property type="project" value="FlyBase"/>
</dbReference>
<dbReference type="GO" id="GO:0045196">
    <property type="term" value="P:establishment or maintenance of neuroblast polarity"/>
    <property type="evidence" value="ECO:0000315"/>
    <property type="project" value="FlyBase"/>
</dbReference>
<dbReference type="GO" id="GO:0090306">
    <property type="term" value="P:meiotic spindle assembly"/>
    <property type="evidence" value="ECO:0000315"/>
    <property type="project" value="FlyBase"/>
</dbReference>
<dbReference type="GO" id="GO:0007017">
    <property type="term" value="P:microtubule-based process"/>
    <property type="evidence" value="ECO:0000315"/>
    <property type="project" value="FlyBase"/>
</dbReference>
<dbReference type="GO" id="GO:0090307">
    <property type="term" value="P:mitotic spindle assembly"/>
    <property type="evidence" value="ECO:0000315"/>
    <property type="project" value="FlyBase"/>
</dbReference>
<dbReference type="GO" id="GO:0006457">
    <property type="term" value="P:protein folding"/>
    <property type="evidence" value="ECO:0007669"/>
    <property type="project" value="InterPro"/>
</dbReference>
<dbReference type="GO" id="GO:0007021">
    <property type="term" value="P:tubulin complex assembly"/>
    <property type="evidence" value="ECO:0000318"/>
    <property type="project" value="GO_Central"/>
</dbReference>
<dbReference type="CDD" id="cd23156">
    <property type="entry name" value="Prefoldin_3"/>
    <property type="match status" value="1"/>
</dbReference>
<dbReference type="FunFam" id="1.10.287.370:FF:000001">
    <property type="entry name" value="Prefoldin subunit 3"/>
    <property type="match status" value="1"/>
</dbReference>
<dbReference type="Gene3D" id="1.10.287.370">
    <property type="match status" value="1"/>
</dbReference>
<dbReference type="InterPro" id="IPR016655">
    <property type="entry name" value="PFD3"/>
</dbReference>
<dbReference type="InterPro" id="IPR009053">
    <property type="entry name" value="Prefoldin"/>
</dbReference>
<dbReference type="InterPro" id="IPR004127">
    <property type="entry name" value="Prefoldin_subunit_alpha"/>
</dbReference>
<dbReference type="PANTHER" id="PTHR12409">
    <property type="entry name" value="PREFOLDIN SUBUNIT 3"/>
    <property type="match status" value="1"/>
</dbReference>
<dbReference type="PANTHER" id="PTHR12409:SF0">
    <property type="entry name" value="PREFOLDIN SUBUNIT 3"/>
    <property type="match status" value="1"/>
</dbReference>
<dbReference type="Pfam" id="PF02996">
    <property type="entry name" value="Prefoldin"/>
    <property type="match status" value="1"/>
</dbReference>
<dbReference type="PIRSF" id="PIRSF016396">
    <property type="entry name" value="Prefoldin_subunit_3"/>
    <property type="match status" value="1"/>
</dbReference>
<dbReference type="SUPFAM" id="SSF46579">
    <property type="entry name" value="Prefoldin"/>
    <property type="match status" value="1"/>
</dbReference>
<feature type="chain" id="PRO_0000153656" description="Prefoldin subunit 3">
    <location>
        <begin position="1"/>
        <end position="194"/>
    </location>
</feature>
<proteinExistence type="evidence at protein level"/>
<name>PFD3_DROME</name>
<sequence length="194" mass="22314">MTGIMDSVEMPKLPENQKTFAGIPEAVFLEEIDTFMSQPENENCEKVLQRLDEQHGKYRFMACNLEARRRKLKSQIPDLERSLEMVNVLRKEDEERETQFLLSDQVFIKTLVPPTKTVYLWLGASVMLEYPLDEAEALLNQNITSAVGNLKSVEHDQDFLRDQITTTEVNMARVYNWGVKKRQAATKTTATTPS</sequence>
<evidence type="ECO:0000250" key="1"/>
<evidence type="ECO:0000269" key="2">
    <source>
    </source>
</evidence>
<evidence type="ECO:0000269" key="3">
    <source>
    </source>
</evidence>
<evidence type="ECO:0000305" key="4"/>